<dbReference type="EC" id="3.1.-.-" evidence="2"/>
<dbReference type="EMBL" id="AC090479">
    <property type="status" value="NOT_ANNOTATED_CDS"/>
    <property type="molecule type" value="Genomic_DNA"/>
</dbReference>
<dbReference type="EMBL" id="AC115894">
    <property type="status" value="NOT_ANNOTATED_CDS"/>
    <property type="molecule type" value="Genomic_DNA"/>
</dbReference>
<dbReference type="EMBL" id="BC050849">
    <property type="protein sequence ID" value="AAH50849.1"/>
    <property type="molecule type" value="mRNA"/>
</dbReference>
<dbReference type="CCDS" id="CCDS37738.1"/>
<dbReference type="RefSeq" id="NP_001074692.1">
    <property type="nucleotide sequence ID" value="NM_001081223.2"/>
</dbReference>
<dbReference type="RefSeq" id="NP_001239424.1">
    <property type="nucleotide sequence ID" value="NM_001252495.1"/>
</dbReference>
<dbReference type="RefSeq" id="XP_006525875.1">
    <property type="nucleotide sequence ID" value="XM_006525812.4"/>
</dbReference>
<dbReference type="SMR" id="Q80YR6"/>
<dbReference type="BioGRID" id="230366">
    <property type="interactions" value="7"/>
</dbReference>
<dbReference type="ComplexPortal" id="CPX-4722">
    <property type="entry name" value="BRCA1-C complex"/>
</dbReference>
<dbReference type="FunCoup" id="Q80YR6">
    <property type="interactions" value="2643"/>
</dbReference>
<dbReference type="IntAct" id="Q80YR6">
    <property type="interactions" value="1"/>
</dbReference>
<dbReference type="STRING" id="10090.ENSMUSP00000111527"/>
<dbReference type="GlyGen" id="Q80YR6">
    <property type="glycosylation" value="2 sites, 1 O-linked glycan (2 sites)"/>
</dbReference>
<dbReference type="iPTMnet" id="Q80YR6"/>
<dbReference type="PhosphoSitePlus" id="Q80YR6"/>
<dbReference type="jPOST" id="Q80YR6"/>
<dbReference type="PaxDb" id="10090-ENSMUSP00000046255"/>
<dbReference type="ProteomicsDB" id="283978"/>
<dbReference type="Antibodypedia" id="7316">
    <property type="antibodies" value="452 antibodies from 42 providers"/>
</dbReference>
<dbReference type="DNASU" id="225182"/>
<dbReference type="Ensembl" id="ENSMUST00000047322.8">
    <property type="protein sequence ID" value="ENSMUSP00000046255.7"/>
    <property type="gene ID" value="ENSMUSG00000041238.17"/>
</dbReference>
<dbReference type="Ensembl" id="ENSMUST00000115861.9">
    <property type="protein sequence ID" value="ENSMUSP00000111527.3"/>
    <property type="gene ID" value="ENSMUSG00000041238.17"/>
</dbReference>
<dbReference type="GeneID" id="225182"/>
<dbReference type="KEGG" id="mmu:225182"/>
<dbReference type="UCSC" id="uc008ebl.1">
    <property type="organism name" value="mouse"/>
</dbReference>
<dbReference type="AGR" id="MGI:2442995"/>
<dbReference type="CTD" id="5932"/>
<dbReference type="MGI" id="MGI:2442995">
    <property type="gene designation" value="Rbbp8"/>
</dbReference>
<dbReference type="VEuPathDB" id="HostDB:ENSMUSG00000041238"/>
<dbReference type="eggNOG" id="ENOG502QTV5">
    <property type="taxonomic scope" value="Eukaryota"/>
</dbReference>
<dbReference type="GeneTree" id="ENSGT00530000063835"/>
<dbReference type="HOGENOM" id="CLU_019262_0_0_1"/>
<dbReference type="InParanoid" id="Q80YR6"/>
<dbReference type="OMA" id="LENFQWS"/>
<dbReference type="OrthoDB" id="5801062at2759"/>
<dbReference type="PhylomeDB" id="Q80YR6"/>
<dbReference type="TreeFam" id="TF106469"/>
<dbReference type="Reactome" id="R-MMU-5685938">
    <property type="pathway name" value="HDR through Single Strand Annealing (SSA)"/>
</dbReference>
<dbReference type="Reactome" id="R-MMU-5685939">
    <property type="pathway name" value="HDR through MMEJ (alt-NHEJ)"/>
</dbReference>
<dbReference type="Reactome" id="R-MMU-5685942">
    <property type="pathway name" value="HDR through Homologous Recombination (HRR)"/>
</dbReference>
<dbReference type="Reactome" id="R-MMU-5693568">
    <property type="pathway name" value="Resolution of D-loop Structures through Holliday Junction Intermediates"/>
</dbReference>
<dbReference type="Reactome" id="R-MMU-5693579">
    <property type="pathway name" value="Homologous DNA Pairing and Strand Exchange"/>
</dbReference>
<dbReference type="Reactome" id="R-MMU-5693607">
    <property type="pathway name" value="Processing of DNA double-strand break ends"/>
</dbReference>
<dbReference type="Reactome" id="R-MMU-5693616">
    <property type="pathway name" value="Presynaptic phase of homologous DNA pairing and strand exchange"/>
</dbReference>
<dbReference type="Reactome" id="R-MMU-6804756">
    <property type="pathway name" value="Regulation of TP53 Activity through Phosphorylation"/>
</dbReference>
<dbReference type="Reactome" id="R-MMU-69473">
    <property type="pathway name" value="G2/M DNA damage checkpoint"/>
</dbReference>
<dbReference type="BioGRID-ORCS" id="225182">
    <property type="hits" value="18 hits in 115 CRISPR screens"/>
</dbReference>
<dbReference type="ChiTaRS" id="Rbbp8">
    <property type="organism name" value="mouse"/>
</dbReference>
<dbReference type="PRO" id="PR:Q80YR6"/>
<dbReference type="Proteomes" id="UP000000589">
    <property type="component" value="Chromosome 18"/>
</dbReference>
<dbReference type="RNAct" id="Q80YR6">
    <property type="molecule type" value="protein"/>
</dbReference>
<dbReference type="Bgee" id="ENSMUSG00000041238">
    <property type="expression patterns" value="Expressed in undifferentiated genital tubercle and 224 other cell types or tissues"/>
</dbReference>
<dbReference type="ExpressionAtlas" id="Q80YR6">
    <property type="expression patterns" value="baseline and differential"/>
</dbReference>
<dbReference type="GO" id="GO:0070533">
    <property type="term" value="C:BRCA1-C complex"/>
    <property type="evidence" value="ECO:0000266"/>
    <property type="project" value="ComplexPortal"/>
</dbReference>
<dbReference type="GO" id="GO:0005654">
    <property type="term" value="C:nucleoplasm"/>
    <property type="evidence" value="ECO:0007669"/>
    <property type="project" value="Ensembl"/>
</dbReference>
<dbReference type="GO" id="GO:0005634">
    <property type="term" value="C:nucleus"/>
    <property type="evidence" value="ECO:0000303"/>
    <property type="project" value="ComplexPortal"/>
</dbReference>
<dbReference type="GO" id="GO:0035861">
    <property type="term" value="C:site of double-strand break"/>
    <property type="evidence" value="ECO:0007669"/>
    <property type="project" value="Ensembl"/>
</dbReference>
<dbReference type="GO" id="GO:0017053">
    <property type="term" value="C:transcription repressor complex"/>
    <property type="evidence" value="ECO:0007669"/>
    <property type="project" value="Ensembl"/>
</dbReference>
<dbReference type="GO" id="GO:0003684">
    <property type="term" value="F:damaged DNA binding"/>
    <property type="evidence" value="ECO:0007669"/>
    <property type="project" value="Ensembl"/>
</dbReference>
<dbReference type="GO" id="GO:0042802">
    <property type="term" value="F:identical protein binding"/>
    <property type="evidence" value="ECO:0007669"/>
    <property type="project" value="Ensembl"/>
</dbReference>
<dbReference type="GO" id="GO:0061629">
    <property type="term" value="F:RNA polymerase II-specific DNA-binding transcription factor binding"/>
    <property type="evidence" value="ECO:0007669"/>
    <property type="project" value="Ensembl"/>
</dbReference>
<dbReference type="GO" id="GO:0000014">
    <property type="term" value="F:single-stranded DNA endodeoxyribonuclease activity"/>
    <property type="evidence" value="ECO:0007669"/>
    <property type="project" value="Ensembl"/>
</dbReference>
<dbReference type="GO" id="GO:0003714">
    <property type="term" value="F:transcription corepressor activity"/>
    <property type="evidence" value="ECO:0007669"/>
    <property type="project" value="Ensembl"/>
</dbReference>
<dbReference type="GO" id="GO:0001835">
    <property type="term" value="P:blastocyst hatching"/>
    <property type="evidence" value="ECO:0000315"/>
    <property type="project" value="MGI"/>
</dbReference>
<dbReference type="GO" id="GO:0051301">
    <property type="term" value="P:cell division"/>
    <property type="evidence" value="ECO:0007669"/>
    <property type="project" value="UniProtKB-KW"/>
</dbReference>
<dbReference type="GO" id="GO:0010792">
    <property type="term" value="P:DNA double-strand break processing involved in repair via single-strand annealing"/>
    <property type="evidence" value="ECO:0007669"/>
    <property type="project" value="Ensembl"/>
</dbReference>
<dbReference type="GO" id="GO:0110025">
    <property type="term" value="P:DNA strand resection involved in replication fork processing"/>
    <property type="evidence" value="ECO:0000303"/>
    <property type="project" value="ComplexPortal"/>
</dbReference>
<dbReference type="GO" id="GO:0000724">
    <property type="term" value="P:double-strand break repair via homologous recombination"/>
    <property type="evidence" value="ECO:0000250"/>
    <property type="project" value="UniProtKB"/>
</dbReference>
<dbReference type="GO" id="GO:0000082">
    <property type="term" value="P:G1/S transition of mitotic cell cycle"/>
    <property type="evidence" value="ECO:0000315"/>
    <property type="project" value="MGI"/>
</dbReference>
<dbReference type="GO" id="GO:0035825">
    <property type="term" value="P:homologous recombination"/>
    <property type="evidence" value="ECO:0000303"/>
    <property type="project" value="ComplexPortal"/>
</dbReference>
<dbReference type="GO" id="GO:0051321">
    <property type="term" value="P:meiotic cell cycle"/>
    <property type="evidence" value="ECO:0007669"/>
    <property type="project" value="UniProtKB-KW"/>
</dbReference>
<dbReference type="GO" id="GO:0044818">
    <property type="term" value="P:mitotic G2/M transition checkpoint"/>
    <property type="evidence" value="ECO:0000303"/>
    <property type="project" value="ComplexPortal"/>
</dbReference>
<dbReference type="InterPro" id="IPR019518">
    <property type="entry name" value="CtIP_N"/>
</dbReference>
<dbReference type="InterPro" id="IPR013882">
    <property type="entry name" value="Ctp1_C"/>
</dbReference>
<dbReference type="InterPro" id="IPR033316">
    <property type="entry name" value="RBBP8-like"/>
</dbReference>
<dbReference type="PANTHER" id="PTHR15107:SF4">
    <property type="entry name" value="DNA ENDONUCLEASE RBBP8"/>
    <property type="match status" value="1"/>
</dbReference>
<dbReference type="PANTHER" id="PTHR15107">
    <property type="entry name" value="RETINOBLASTOMA BINDING PROTEIN 8"/>
    <property type="match status" value="1"/>
</dbReference>
<dbReference type="Pfam" id="PF10482">
    <property type="entry name" value="CtIP_N"/>
    <property type="match status" value="1"/>
</dbReference>
<dbReference type="Pfam" id="PF08573">
    <property type="entry name" value="SAE2"/>
    <property type="match status" value="1"/>
</dbReference>
<proteinExistence type="evidence at protein level"/>
<name>CTIP_MOUSE</name>
<organism>
    <name type="scientific">Mus musculus</name>
    <name type="common">Mouse</name>
    <dbReference type="NCBI Taxonomy" id="10090"/>
    <lineage>
        <taxon>Eukaryota</taxon>
        <taxon>Metazoa</taxon>
        <taxon>Chordata</taxon>
        <taxon>Craniata</taxon>
        <taxon>Vertebrata</taxon>
        <taxon>Euteleostomi</taxon>
        <taxon>Mammalia</taxon>
        <taxon>Eutheria</taxon>
        <taxon>Euarchontoglires</taxon>
        <taxon>Glires</taxon>
        <taxon>Rodentia</taxon>
        <taxon>Myomorpha</taxon>
        <taxon>Muroidea</taxon>
        <taxon>Muridae</taxon>
        <taxon>Murinae</taxon>
        <taxon>Mus</taxon>
        <taxon>Mus</taxon>
    </lineage>
</organism>
<keyword id="KW-0131">Cell cycle</keyword>
<keyword id="KW-0132">Cell division</keyword>
<keyword id="KW-0158">Chromosome</keyword>
<keyword id="KW-0175">Coiled coil</keyword>
<keyword id="KW-0227">DNA damage</keyword>
<keyword id="KW-0234">DNA repair</keyword>
<keyword id="KW-0238">DNA-binding</keyword>
<keyword id="KW-0255">Endonuclease</keyword>
<keyword id="KW-0378">Hydrolase</keyword>
<keyword id="KW-1017">Isopeptide bond</keyword>
<keyword id="KW-0469">Meiosis</keyword>
<keyword id="KW-0498">Mitosis</keyword>
<keyword id="KW-0540">Nuclease</keyword>
<keyword id="KW-0539">Nucleus</keyword>
<keyword id="KW-0597">Phosphoprotein</keyword>
<keyword id="KW-1185">Reference proteome</keyword>
<keyword id="KW-0832">Ubl conjugation</keyword>
<keyword id="KW-0862">Zinc</keyword>
<evidence type="ECO:0000250" key="1"/>
<evidence type="ECO:0000250" key="2">
    <source>
        <dbReference type="UniProtKB" id="Q99708"/>
    </source>
</evidence>
<evidence type="ECO:0000256" key="3">
    <source>
        <dbReference type="SAM" id="MobiDB-lite"/>
    </source>
</evidence>
<evidence type="ECO:0000269" key="4">
    <source>
    </source>
</evidence>
<evidence type="ECO:0000269" key="5">
    <source>
    </source>
</evidence>
<evidence type="ECO:0000269" key="6">
    <source>
    </source>
</evidence>
<evidence type="ECO:0000305" key="7"/>
<evidence type="ECO:0000305" key="8">
    <source>
    </source>
</evidence>
<evidence type="ECO:0000305" key="9">
    <source>
    </source>
</evidence>
<evidence type="ECO:0007744" key="10">
    <source>
    </source>
</evidence>
<gene>
    <name type="primary">Rbbp8</name>
    <name type="synonym">Ctip</name>
</gene>
<comment type="function">
    <text evidence="2 4 5">Endonuclease that cooperates with the MRE11-RAD50-NBN (MRN) complex in DNA-end resection, the first step of double-strand break (DSB) repair through the homologous recombination (HR) pathway (By similarity). HR is restricted to S and G2 phases of the cell cycle and preferentially repairs DSBs resulting from replication fork collapse (By similarity). Key determinant of DSB repair pathway choice, as it commits cells to HR by preventing classical non-homologous end-joining (NHEJ) (By similarity). Specifically promotes the endonuclease activity of the MRN complex to clear DNA ends containing protein adducts: recruited to DSBs by NBN following phosphorylation by CDK1, and promotes the endonuclease activity of MRE11 to clear protein-DNA adducts and generate clean double-strand break ends (By similarity). Functions downstream of the MRN complex and ATM, promotes ATR activation and its recruitment to DSBs in the S/G2 phase facilitating the generation of ssDNA (By similarity). Component of the BRCA1-RBBP8 complex that regulates CHEK1 activation and controls cell cycle G2/M checkpoints on DNA damage (By similarity). During immunoglobulin heavy chain class-switch recombination, promotes microhomology-mediated alternative end joining (A-NHEJ) and plays an essential role in chromosomal translocations (PubMed:21131978, PubMed:21131982). Binds preferentially to DNA Y-junctions and to DNA substrates with blocked ends and promotes intermolecular DNA bridging (By similarity).</text>
</comment>
<comment type="subunit">
    <text evidence="2 6">Homotetramer; formed by antiparallel association of helical extensions protruding from the N-termini of two parallel coiled-coil dimers (By similarity). Forms a dumbbell-shaped particle in which polar globular domains are held about 30 nm apart by a central rod (By similarity). Homotetramerization is required for DNA-end resection and repair (By similarity). Interacts (via the PXDLS motif) with CTBP1; the interaction is disrupted via binding of the adenovirus E1A to CTBP1. Component of the BRCA1-RBBP8 complex. Interacts (the Ser-326 phosphorylated form) with BRCA1 (via the C-terminal BRCT domains): the interaction occurs in the G2 phase, ubiquitinates RBBP8 and involves RBBP8 in BRCA1-dependent G2/M checkpoint control on DNA damage. Interacts with RB1. Interacts with the MRN complex. Interacts directly with MRE11; the interaction is required for efficient homologous recombination (HR) and regulation of the MRN complex. Interacts (when phosphorylated by CDK1) with NBN; promoting association with the MRN complex. Interacts with LMO4 (via the LIM zinc-binding 1 domain) (PubMed:23353824). Interacts with SIAH1. Interacts with RNF138. Interacts with EXD2. Interacts with CUL3 and KLHL15; this interaction leads to RBBP8 proteasomal degradation. Directly interacts with PIN1; this interaction depends upon RBBP8 phosphorylation, predominantly at Thr-315. Interacts with FZR1; this interaction leads to APC/C-mediated RBBP8 proteasomal degradation. Interacts with AUNIP; leading to recruit RBBP8 to sites of DNA damage. Interacts with SAMHD1 (By similarity). Interacts with HDGFL2 (By similarity).</text>
</comment>
<comment type="subcellular location">
    <subcellularLocation>
        <location evidence="2">Nucleus</location>
    </subcellularLocation>
    <subcellularLocation>
        <location evidence="2">Chromosome</location>
    </subcellularLocation>
    <text evidence="2">Associates with sites of DNA damage in S/G2 phase. Recruited to DSBs by the MRE11-RAD50-NBN (MRN) complex following phosphorylation by CDK1, which promotes interaction with NBN. Ubiquitinated RBBP8 binds to chromatin following DNA damage.</text>
</comment>
<comment type="domain">
    <text evidence="2">The PXDLS motif binds to a cleft in CtBP proteins.</text>
</comment>
<comment type="domain">
    <text evidence="2">The damage-recruitment motif is required for DNA binding and translocation to sites of DNA damage.</text>
</comment>
<comment type="PTM">
    <text evidence="2">Hyperphosphorylation upon ionizing radiation results in dissociation from BRCA1. Phosphorylation at Thr-843 by CDK1 is essential for the recruitment to DNA and the DNA repair function. Phosphorylation at Thr-843 and Thr-855 promote interaction with NBN and recruitment to double-strand breaks (DSBs). Phosphorylated on Ser-326 as cells enter G2 phase. Phosphorylated at Ser-326 as cells enter G2 phase. This phosphorylation is required for binding BRCA1 and for the G2/M DNA damage transition checkpoint control (By similarity). Phosphorylation at Thr-315 is required for PIN1-binding, while phosphorylation at Ser-276 serves as a PIN1 isomerization site. Phosphorylation at Thr-315 is cell-cycle dependent. It steadily increases during S phase, peaks at late S/G2 phase, and drops at G1 (By similarity). Phosphorylation is not required for tetramerization (By similarity). Binds to DNA more strongly when dephosphorylated (By similarity).</text>
</comment>
<comment type="PTM">
    <text evidence="2">Ubiquitinated. Ubiquitination at multiple sites by BRCA1 (via its N-terminal RING domain) does not lead to its proteasomal degradation but instead the ubiquitinated RBBP8 binds to chromatin following DNA damage and may play a role in G2/M checkpoint control. Ubiquitinated by RNF138 at its N-terminus. Ubiquitinated through 'Lys-48' by the E3 CUL3-KLHL15 complex; this modification leads to proteasomal degradation. Ubiquitinated by the E3 FZR1/APC/C complex; this modification leads to proteasomal degradation.</text>
</comment>
<comment type="miscellaneous">
    <text evidence="2">Binds one Zn(2+) atom per dimer. Zn(2+)-binding is not required for homotetramerization.</text>
</comment>
<comment type="similarity">
    <text evidence="7">Belongs to the COM1/SAE2/CtIP family.</text>
</comment>
<comment type="caution">
    <text evidence="8 9">Upon DNA damage, was shown to interact with SIRT6 resulting in its deacetylation. However, this study was later retracted.</text>
</comment>
<protein>
    <recommendedName>
        <fullName>DNA endonuclease RBBP8</fullName>
        <ecNumber evidence="2">3.1.-.-</ecNumber>
    </recommendedName>
    <alternativeName>
        <fullName>CtBP-interacting protein</fullName>
        <shortName>CtIP</shortName>
    </alternativeName>
    <alternativeName>
        <fullName>Retinoblastoma-binding protein 8</fullName>
        <shortName>RBBP-8</shortName>
    </alternativeName>
    <alternativeName>
        <fullName>Retinoblastoma-interacting protein and myosin-like</fullName>
        <shortName>RIM</shortName>
    </alternativeName>
    <alternativeName>
        <fullName>Sporulation in the absence of SPO11 protein 2 homolog</fullName>
        <shortName>SAE2</shortName>
    </alternativeName>
</protein>
<reference key="1">
    <citation type="journal article" date="2009" name="PLoS Biol.">
        <title>Lineage-specific biology revealed by a finished genome assembly of the mouse.</title>
        <authorList>
            <person name="Church D.M."/>
            <person name="Goodstadt L."/>
            <person name="Hillier L.W."/>
            <person name="Zody M.C."/>
            <person name="Goldstein S."/>
            <person name="She X."/>
            <person name="Bult C.J."/>
            <person name="Agarwala R."/>
            <person name="Cherry J.L."/>
            <person name="DiCuccio M."/>
            <person name="Hlavina W."/>
            <person name="Kapustin Y."/>
            <person name="Meric P."/>
            <person name="Maglott D."/>
            <person name="Birtle Z."/>
            <person name="Marques A.C."/>
            <person name="Graves T."/>
            <person name="Zhou S."/>
            <person name="Teague B."/>
            <person name="Potamousis K."/>
            <person name="Churas C."/>
            <person name="Place M."/>
            <person name="Herschleb J."/>
            <person name="Runnheim R."/>
            <person name="Forrest D."/>
            <person name="Amos-Landgraf J."/>
            <person name="Schwartz D.C."/>
            <person name="Cheng Z."/>
            <person name="Lindblad-Toh K."/>
            <person name="Eichler E.E."/>
            <person name="Ponting C.P."/>
        </authorList>
    </citation>
    <scope>NUCLEOTIDE SEQUENCE [LARGE SCALE GENOMIC DNA]</scope>
    <source>
        <strain>C57BL/6J</strain>
    </source>
</reference>
<reference key="2">
    <citation type="journal article" date="2004" name="Genome Res.">
        <title>The status, quality, and expansion of the NIH full-length cDNA project: the Mammalian Gene Collection (MGC).</title>
        <authorList>
            <consortium name="The MGC Project Team"/>
        </authorList>
    </citation>
    <scope>NUCLEOTIDE SEQUENCE [LARGE SCALE MRNA]</scope>
    <source>
        <tissue>Limb</tissue>
    </source>
</reference>
<reference key="3">
    <citation type="journal article" date="2010" name="Cell">
        <title>A tissue-specific atlas of mouse protein phosphorylation and expression.</title>
        <authorList>
            <person name="Huttlin E.L."/>
            <person name="Jedrychowski M.P."/>
            <person name="Elias J.E."/>
            <person name="Goswami T."/>
            <person name="Rad R."/>
            <person name="Beausoleil S.A."/>
            <person name="Villen J."/>
            <person name="Haas W."/>
            <person name="Sowa M.E."/>
            <person name="Gygi S.P."/>
        </authorList>
    </citation>
    <scope>PHOSPHORYLATION [LARGE SCALE ANALYSIS] AT SER-233 AND SER-720</scope>
    <scope>IDENTIFICATION BY MASS SPECTROMETRY [LARGE SCALE ANALYSIS]</scope>
    <source>
        <tissue>Spleen</tissue>
        <tissue>Testis</tissue>
    </source>
</reference>
<reference key="4">
    <citation type="journal article" date="2010" name="Science">
        <title>Human SIRT6 promotes DNA end resection through CtIP deacetylation.</title>
        <authorList>
            <person name="Kaidi A."/>
            <person name="Weinert B.T."/>
            <person name="Choudhary C."/>
            <person name="Jackson S.P."/>
        </authorList>
    </citation>
    <scope>RETRACTED PAPER</scope>
</reference>
<reference key="5">
    <citation type="journal article" date="2019" name="Science">
        <authorList>
            <person name="Kaidi A."/>
            <person name="Weinert B.T."/>
            <person name="Choudhary C."/>
            <person name="Jackson S.P."/>
        </authorList>
    </citation>
    <scope>RETRACTION NOTICE OF PUBMED:20829486</scope>
</reference>
<reference key="6">
    <citation type="journal article" date="2011" name="Nat. Struct. Mol. Biol.">
        <title>An essential role for CtIP in chromosomal translocation formation through an alternative end-joining pathway.</title>
        <authorList>
            <person name="Zhang Y."/>
            <person name="Jasin M."/>
        </authorList>
    </citation>
    <scope>FUNCTION</scope>
</reference>
<reference key="7">
    <citation type="journal article" date="2011" name="Nat. Struct. Mol. Biol.">
        <title>CtIP promotes microhomology-mediated alternative end joining during class-switch recombination.</title>
        <authorList>
            <person name="Lee-Theilen M."/>
            <person name="Matthews A.J."/>
            <person name="Kelly D."/>
            <person name="Zheng S."/>
            <person name="Chaudhuri J."/>
        </authorList>
    </citation>
    <scope>FUNCTION</scope>
    <scope>SUBCELLULAR LOCATION</scope>
    <scope>DNA-BINDING</scope>
</reference>
<reference key="8">
    <citation type="journal article" date="2013" name="J. Mol. Biol.">
        <title>Structural basis of the interaction of the breast cancer oncogene LMO4 with the tumour suppressor CtIP/RBBP8.</title>
        <authorList>
            <person name="Stokes P.H."/>
            <person name="Liew C.W."/>
            <person name="Kwan A.H."/>
            <person name="Foo P."/>
            <person name="Barker H.E."/>
            <person name="Djamirze A."/>
            <person name="O'Reilly V."/>
            <person name="Visvader J.E."/>
            <person name="Mackay J.P."/>
            <person name="Matthews J.M."/>
        </authorList>
    </citation>
    <scope>INTERACTION WITH LMO4</scope>
</reference>
<feature type="chain" id="PRO_0000417036" description="DNA endonuclease RBBP8">
    <location>
        <begin position="1"/>
        <end position="893"/>
    </location>
</feature>
<feature type="region of interest" description="Essential for binding to the MRN complex and for RPA focus formation on DNA damage" evidence="1">
    <location>
        <begin position="22"/>
        <end position="45"/>
    </location>
</feature>
<feature type="region of interest" description="Required for interaction with LMO4, probably by stabilizing the interaction through RPPB8 dimerization" evidence="2">
    <location>
        <begin position="45"/>
        <end position="160"/>
    </location>
</feature>
<feature type="region of interest" description="Disordered" evidence="3">
    <location>
        <begin position="296"/>
        <end position="324"/>
    </location>
</feature>
<feature type="region of interest" description="Damage-recruitment motif" evidence="2">
    <location>
        <begin position="508"/>
        <end position="556"/>
    </location>
</feature>
<feature type="region of interest" description="Required for interaction with LMO4, probably by making physical contact with LMO4" evidence="2">
    <location>
        <begin position="639"/>
        <end position="683"/>
    </location>
</feature>
<feature type="region of interest" description="Disordered" evidence="3">
    <location>
        <begin position="869"/>
        <end position="893"/>
    </location>
</feature>
<feature type="coiled-coil region" evidence="2">
    <location>
        <begin position="35"/>
        <end position="84"/>
    </location>
</feature>
<feature type="coiled-coil region" evidence="2">
    <location>
        <begin position="117"/>
        <end position="138"/>
    </location>
</feature>
<feature type="short sequence motif" description="PXDLS motif" evidence="2">
    <location>
        <begin position="489"/>
        <end position="493"/>
    </location>
</feature>
<feature type="short sequence motif" description="KLHL15-binding" evidence="2">
    <location>
        <begin position="836"/>
        <end position="838"/>
    </location>
</feature>
<feature type="compositionally biased region" description="Basic and acidic residues" evidence="3">
    <location>
        <begin position="296"/>
        <end position="307"/>
    </location>
</feature>
<feature type="compositionally biased region" description="Polar residues" evidence="3">
    <location>
        <begin position="308"/>
        <end position="324"/>
    </location>
</feature>
<feature type="modified residue" description="Phosphoserine" evidence="10">
    <location>
        <position position="233"/>
    </location>
</feature>
<feature type="modified residue" description="Phosphoserine" evidence="2">
    <location>
        <position position="276"/>
    </location>
</feature>
<feature type="modified residue" description="Phosphothreonine" evidence="2">
    <location>
        <position position="315"/>
    </location>
</feature>
<feature type="modified residue" description="Phosphoserine" evidence="2">
    <location>
        <position position="325"/>
    </location>
</feature>
<feature type="modified residue" description="Phosphoserine" evidence="2">
    <location>
        <position position="326"/>
    </location>
</feature>
<feature type="modified residue" description="Phosphoserine" evidence="2">
    <location>
        <position position="348"/>
    </location>
</feature>
<feature type="modified residue" description="Phosphoserine" evidence="2">
    <location>
        <position position="378"/>
    </location>
</feature>
<feature type="modified residue" description="Phosphoserine; by ATM" evidence="2">
    <location>
        <position position="662"/>
    </location>
</feature>
<feature type="modified residue" description="Phosphoserine" evidence="2">
    <location>
        <position position="677"/>
    </location>
</feature>
<feature type="modified residue" description="Phosphoserine" evidence="10">
    <location>
        <position position="720"/>
    </location>
</feature>
<feature type="modified residue" description="Phosphoserine; by ATM" evidence="2">
    <location>
        <position position="742"/>
    </location>
</feature>
<feature type="modified residue" description="Phosphothreonine" evidence="2">
    <location>
        <position position="843"/>
    </location>
</feature>
<feature type="modified residue" description="Phosphothreonine" evidence="2">
    <location>
        <position position="855"/>
    </location>
</feature>
<feature type="cross-link" description="Glycyl lysine isopeptide (Lys-Gly) (interchain with G-Cter in SUMO2)" evidence="2">
    <location>
        <position position="62"/>
    </location>
</feature>
<feature type="cross-link" description="Glycyl lysine isopeptide (Lys-Gly) (interchain with G-Cter in SUMO2)" evidence="2">
    <location>
        <position position="115"/>
    </location>
</feature>
<feature type="cross-link" description="Glycyl lysine isopeptide (Lys-Gly) (interchain with G-Cter in SUMO2)" evidence="2">
    <location>
        <position position="193"/>
    </location>
</feature>
<feature type="cross-link" description="Glycyl lysine isopeptide (Lys-Gly) (interchain with G-Cter in SUMO2)" evidence="2">
    <location>
        <position position="359"/>
    </location>
</feature>
<feature type="cross-link" description="Glycyl lysine isopeptide (Lys-Gly) (interchain with G-Cter in SUMO2)" evidence="2">
    <location>
        <position position="377"/>
    </location>
</feature>
<feature type="cross-link" description="Glycyl lysine isopeptide (Lys-Gly) (interchain with G-Cter in SUMO2)" evidence="2">
    <location>
        <position position="394"/>
    </location>
</feature>
<feature type="cross-link" description="Glycyl lysine isopeptide (Lys-Gly) (interchain with G-Cter in SUMO2)" evidence="2">
    <location>
        <position position="403"/>
    </location>
</feature>
<feature type="cross-link" description="Glycyl lysine isopeptide (Lys-Gly) (interchain with G-Cter in SUMO2)" evidence="2">
    <location>
        <position position="409"/>
    </location>
</feature>
<feature type="cross-link" description="Glycyl lysine isopeptide (Lys-Gly) (interchain with G-Cter in SUMO2)" evidence="2">
    <location>
        <position position="437"/>
    </location>
</feature>
<feature type="cross-link" description="Glycyl lysine isopeptide (Lys-Gly) (interchain with G-Cter in SUMO2); alternate" evidence="2">
    <location>
        <position position="525"/>
    </location>
</feature>
<feature type="cross-link" description="Glycyl lysine isopeptide (Lys-Gly) (interchain with G-Cter in SUMO2)" evidence="2">
    <location>
        <position position="529"/>
    </location>
</feature>
<feature type="cross-link" description="Glycyl lysine isopeptide (Lys-Gly) (interchain with G-Cter in SUMO2)" evidence="2">
    <location>
        <position position="570"/>
    </location>
</feature>
<feature type="cross-link" description="Glycyl lysine isopeptide (Lys-Gly) (interchain with G-Cter in SUMO2)" evidence="2">
    <location>
        <position position="576"/>
    </location>
</feature>
<feature type="cross-link" description="Glycyl lysine isopeptide (Lys-Gly) (interchain with G-Cter in SUMO2); alternate" evidence="2">
    <location>
        <position position="602"/>
    </location>
</feature>
<feature type="cross-link" description="Glycyl lysine isopeptide (Lys-Gly) (interchain with G-Cter in SUMO2)" evidence="2">
    <location>
        <position position="611"/>
    </location>
</feature>
<feature type="cross-link" description="Glycyl lysine isopeptide (Lys-Gly) (interchain with G-Cter in SUMO2)" evidence="2">
    <location>
        <position position="636"/>
    </location>
</feature>
<feature type="cross-link" description="Glycyl lysine isopeptide (Lys-Gly) (interchain with G-Cter in SUMO2)" evidence="2">
    <location>
        <position position="638"/>
    </location>
</feature>
<feature type="cross-link" description="Glycyl lysine isopeptide (Lys-Gly) (interchain with G-Cter in SUMO2)" evidence="2">
    <location>
        <position position="674"/>
    </location>
</feature>
<feature type="cross-link" description="Glycyl lysine isopeptide (Lys-Gly) (interchain with G-Cter in SUMO2)" evidence="2">
    <location>
        <position position="716"/>
    </location>
</feature>
<feature type="cross-link" description="Glycyl lysine isopeptide (Lys-Gly) (interchain with G-Cter in SUMO2)" evidence="2">
    <location>
        <position position="778"/>
    </location>
</feature>
<feature type="cross-link" description="Glycyl lysine isopeptide (Lys-Gly) (interchain with G-Cter in SUMO2)" evidence="2">
    <location>
        <position position="865"/>
    </location>
</feature>
<sequence length="893" mass="100831">MSISGSGCGSPNSADASNDFKELWTKLKEYHDKEVQGLQVKVTKLKKERILDAQRLEEFFTKNQQLRDQQKVLQETIKILEDRLRAGLCDRCAVTEEHMHKKQQEFENIRQQNLKLITELMNEKNTLQEENKKLSEQLQQKMENGQQDQVAELACEENIIPDSPVTSFSFSGINRLRKKENLHVRYVEQTHTKLERSLCTNELRKISKDSAPAPVNSEEHEILVADTCDQNHSPLSKICETSSYPTDKTSFNLDTVVAETLGLNGQEESEPQGPMSPLGSELYHCLKEDHKKHPFMESARSKEDSLRFSDSASKTPPQEFTTRASSPVFGATSTVKAHLGLNTSFSPSLLDIGKKNLLKTAPFSNIAVSRSEKVRSKSEDNALFTQHSLGSEVKVISQSFSSKQILTNKTVSDSVDEQCSADHMNTTVADKYLVPLKSLGGKASKRKRTEEESEHAVKCPQACFDKENALPFPMENQFSMNGDHVMDKPLDLSDRFAATQRQEKNHGNETSKNKLKQATIYEALKPIPKGSSSGRKALSGDCMPAKDSWETYCLQPRSLQSSSKFSPDQKTPLQIKEENPVFKTPPCSQESLETENLFGDVKGTGSLVPTKVKSRAVHGGCELASVLQLNPCRVAKTKALPSNQDTSFENIQWSVDPGADLSQYKMDVTVIDTKDSSHSRLGGETVDMDCTLVSETVLLKMKKQEQKERSPNGDIKMNDSLEDMFDRTTHEEYESCLADSFSQVPDEEELPDTTKKTNIPADKQDGVKQKAFVGPYFKDKERETSIQNFPHIEVVRKKEERRKLLGHTCKECEIYYADLPAEEREKKLASCSRHRFRYIPPNTPENFWEVGFPSTQTCLERGYIKEDLDLSPRPKRRQPYNAVFSPKGKEQRT</sequence>
<accession>Q80YR6</accession>